<proteinExistence type="evidence at transcript level"/>
<sequence length="704" mass="79110">MRFWTSAAAAEILRRDEHVVRKLLNPRVYSKLVNAFSETETKLRSLCEDSNPQLKNAVSVFQQAVDSGSSLAFAGNNLMAKLVRSRNHELAFSFYRKMLETDTFINFVSLSGLLECYVQMRKTGFAFGVLALMLKRGFAFNVYNHNILLKGLCRNLECGKAVSLLREMRRNSLMPDVFSYNTVIRGFCEGKELEKALELANEMKGSGCSWSLVTWGILIDAFCKAGKMDEAMGFLKEMKFMGLEADLVVYTSLIRGFCDCGELDRGKALFDEVLERGDSPCAITYNTLIRGFCKLGQLKEASEIFEFMIERGVRPNVYTYTGLIDGLCGVGKTKEALQLLNLMIEKDEEPNAVTYNIIINKLCKDGLVADAVEIVELMKKRRTRPDNITYNILLGGLCAKGDLDEASKLLYLMLKDSSYTDPDVISYNALIHGLCKENRLHQALDIYDLLVEKLGAGDRVTTNILLNSTLKAGDVNKAMELWKQISDSKIVRNSDTYTAMIDGFCKTGMLNVAKGLLCKMRVSELQPSVFDYNCLLSSLCKEGSLDQAWRLFEEMQRDNNFPDVVSFNIMIDGSLKAGDIKSAESLLVGMSRAGLSPDLFTYSKLINRFLKLGYLDEAISFFDKMVDSGFEPDAHICDSVLKYCISQGETDKLTELVKKLVDKDIVLDKELTCTVMDYMCNSSANMDLAKRLLRVTDDKEERDK</sequence>
<evidence type="ECO:0000305" key="1"/>
<dbReference type="EMBL" id="AL035524">
    <property type="protein sequence ID" value="CAB36770.1"/>
    <property type="molecule type" value="Genomic_DNA"/>
</dbReference>
<dbReference type="EMBL" id="AL161572">
    <property type="protein sequence ID" value="CAB79603.1"/>
    <property type="molecule type" value="Genomic_DNA"/>
</dbReference>
<dbReference type="EMBL" id="CP002687">
    <property type="protein sequence ID" value="AEE85420.1"/>
    <property type="molecule type" value="Genomic_DNA"/>
</dbReference>
<dbReference type="EMBL" id="AY128275">
    <property type="protein sequence ID" value="AAM91084.1"/>
    <property type="molecule type" value="mRNA"/>
</dbReference>
<dbReference type="PIR" id="T02902">
    <property type="entry name" value="T02902"/>
</dbReference>
<dbReference type="RefSeq" id="NP_194530.1">
    <property type="nucleotide sequence ID" value="NM_118939.3"/>
</dbReference>
<dbReference type="SMR" id="Q9SUD8"/>
<dbReference type="FunCoup" id="Q9SUD8">
    <property type="interactions" value="377"/>
</dbReference>
<dbReference type="STRING" id="3702.Q9SUD8"/>
<dbReference type="PaxDb" id="3702-AT4G28010.1"/>
<dbReference type="ProteomicsDB" id="248991"/>
<dbReference type="EnsemblPlants" id="AT4G28010.1">
    <property type="protein sequence ID" value="AT4G28010.1"/>
    <property type="gene ID" value="AT4G28010"/>
</dbReference>
<dbReference type="GeneID" id="828915"/>
<dbReference type="Gramene" id="AT4G28010.1">
    <property type="protein sequence ID" value="AT4G28010.1"/>
    <property type="gene ID" value="AT4G28010"/>
</dbReference>
<dbReference type="KEGG" id="ath:AT4G28010"/>
<dbReference type="Araport" id="AT4G28010"/>
<dbReference type="TAIR" id="AT4G28010">
    <property type="gene designation" value="RPF5"/>
</dbReference>
<dbReference type="eggNOG" id="KOG4197">
    <property type="taxonomic scope" value="Eukaryota"/>
</dbReference>
<dbReference type="HOGENOM" id="CLU_002706_49_12_1"/>
<dbReference type="InParanoid" id="Q9SUD8"/>
<dbReference type="OMA" id="EHPENTG"/>
<dbReference type="PhylomeDB" id="Q9SUD8"/>
<dbReference type="PRO" id="PR:Q9SUD8"/>
<dbReference type="Proteomes" id="UP000006548">
    <property type="component" value="Chromosome 4"/>
</dbReference>
<dbReference type="ExpressionAtlas" id="Q9SUD8">
    <property type="expression patterns" value="baseline and differential"/>
</dbReference>
<dbReference type="GO" id="GO:0005739">
    <property type="term" value="C:mitochondrion"/>
    <property type="evidence" value="ECO:0007669"/>
    <property type="project" value="GOC"/>
</dbReference>
<dbReference type="GO" id="GO:0090617">
    <property type="term" value="P:mitochondrial mRNA 5'-end processing"/>
    <property type="evidence" value="ECO:0000315"/>
    <property type="project" value="TAIR"/>
</dbReference>
<dbReference type="Gene3D" id="1.25.40.10">
    <property type="entry name" value="Tetratricopeptide repeat domain"/>
    <property type="match status" value="7"/>
</dbReference>
<dbReference type="InterPro" id="IPR002885">
    <property type="entry name" value="Pentatricopeptide_rpt"/>
</dbReference>
<dbReference type="InterPro" id="IPR011990">
    <property type="entry name" value="TPR-like_helical_dom_sf"/>
</dbReference>
<dbReference type="NCBIfam" id="TIGR00756">
    <property type="entry name" value="PPR"/>
    <property type="match status" value="14"/>
</dbReference>
<dbReference type="PANTHER" id="PTHR47941">
    <property type="entry name" value="PENTATRICOPEPTIDE REPEAT-CONTAINING PROTEIN 3, MITOCHONDRIAL"/>
    <property type="match status" value="1"/>
</dbReference>
<dbReference type="Pfam" id="PF01535">
    <property type="entry name" value="PPR"/>
    <property type="match status" value="1"/>
</dbReference>
<dbReference type="Pfam" id="PF12854">
    <property type="entry name" value="PPR_1"/>
    <property type="match status" value="3"/>
</dbReference>
<dbReference type="Pfam" id="PF13041">
    <property type="entry name" value="PPR_2"/>
    <property type="match status" value="5"/>
</dbReference>
<dbReference type="SUPFAM" id="SSF81901">
    <property type="entry name" value="HCP-like"/>
    <property type="match status" value="2"/>
</dbReference>
<dbReference type="PROSITE" id="PS51375">
    <property type="entry name" value="PPR"/>
    <property type="match status" value="17"/>
</dbReference>
<accession>Q9SUD8</accession>
<accession>Q8L7T0</accession>
<name>PP340_ARATH</name>
<protein>
    <recommendedName>
        <fullName>Pentatricopeptide repeat-containing protein At4g28010</fullName>
    </recommendedName>
</protein>
<comment type="similarity">
    <text evidence="1">Belongs to the PPR family. P subfamily.</text>
</comment>
<comment type="online information" name="Pentatricopeptide repeat proteins">
    <link uri="https://ppr.plantenergy.uwa.edu.au"/>
</comment>
<reference key="1">
    <citation type="journal article" date="1999" name="Nature">
        <title>Sequence and analysis of chromosome 4 of the plant Arabidopsis thaliana.</title>
        <authorList>
            <person name="Mayer K.F.X."/>
            <person name="Schueller C."/>
            <person name="Wambutt R."/>
            <person name="Murphy G."/>
            <person name="Volckaert G."/>
            <person name="Pohl T."/>
            <person name="Duesterhoeft A."/>
            <person name="Stiekema W."/>
            <person name="Entian K.-D."/>
            <person name="Terryn N."/>
            <person name="Harris B."/>
            <person name="Ansorge W."/>
            <person name="Brandt P."/>
            <person name="Grivell L.A."/>
            <person name="Rieger M."/>
            <person name="Weichselgartner M."/>
            <person name="de Simone V."/>
            <person name="Obermaier B."/>
            <person name="Mache R."/>
            <person name="Mueller M."/>
            <person name="Kreis M."/>
            <person name="Delseny M."/>
            <person name="Puigdomenech P."/>
            <person name="Watson M."/>
            <person name="Schmidtheini T."/>
            <person name="Reichert B."/>
            <person name="Portetelle D."/>
            <person name="Perez-Alonso M."/>
            <person name="Boutry M."/>
            <person name="Bancroft I."/>
            <person name="Vos P."/>
            <person name="Hoheisel J."/>
            <person name="Zimmermann W."/>
            <person name="Wedler H."/>
            <person name="Ridley P."/>
            <person name="Langham S.-A."/>
            <person name="McCullagh B."/>
            <person name="Bilham L."/>
            <person name="Robben J."/>
            <person name="van der Schueren J."/>
            <person name="Grymonprez B."/>
            <person name="Chuang Y.-J."/>
            <person name="Vandenbussche F."/>
            <person name="Braeken M."/>
            <person name="Weltjens I."/>
            <person name="Voet M."/>
            <person name="Bastiaens I."/>
            <person name="Aert R."/>
            <person name="Defoor E."/>
            <person name="Weitzenegger T."/>
            <person name="Bothe G."/>
            <person name="Ramsperger U."/>
            <person name="Hilbert H."/>
            <person name="Braun M."/>
            <person name="Holzer E."/>
            <person name="Brandt A."/>
            <person name="Peters S."/>
            <person name="van Staveren M."/>
            <person name="Dirkse W."/>
            <person name="Mooijman P."/>
            <person name="Klein Lankhorst R."/>
            <person name="Rose M."/>
            <person name="Hauf J."/>
            <person name="Koetter P."/>
            <person name="Berneiser S."/>
            <person name="Hempel S."/>
            <person name="Feldpausch M."/>
            <person name="Lamberth S."/>
            <person name="Van den Daele H."/>
            <person name="De Keyser A."/>
            <person name="Buysshaert C."/>
            <person name="Gielen J."/>
            <person name="Villarroel R."/>
            <person name="De Clercq R."/>
            <person name="van Montagu M."/>
            <person name="Rogers J."/>
            <person name="Cronin A."/>
            <person name="Quail M.A."/>
            <person name="Bray-Allen S."/>
            <person name="Clark L."/>
            <person name="Doggett J."/>
            <person name="Hall S."/>
            <person name="Kay M."/>
            <person name="Lennard N."/>
            <person name="McLay K."/>
            <person name="Mayes R."/>
            <person name="Pettett A."/>
            <person name="Rajandream M.A."/>
            <person name="Lyne M."/>
            <person name="Benes V."/>
            <person name="Rechmann S."/>
            <person name="Borkova D."/>
            <person name="Bloecker H."/>
            <person name="Scharfe M."/>
            <person name="Grimm M."/>
            <person name="Loehnert T.-H."/>
            <person name="Dose S."/>
            <person name="de Haan M."/>
            <person name="Maarse A.C."/>
            <person name="Schaefer M."/>
            <person name="Mueller-Auer S."/>
            <person name="Gabel C."/>
            <person name="Fuchs M."/>
            <person name="Fartmann B."/>
            <person name="Granderath K."/>
            <person name="Dauner D."/>
            <person name="Herzl A."/>
            <person name="Neumann S."/>
            <person name="Argiriou A."/>
            <person name="Vitale D."/>
            <person name="Liguori R."/>
            <person name="Piravandi E."/>
            <person name="Massenet O."/>
            <person name="Quigley F."/>
            <person name="Clabauld G."/>
            <person name="Muendlein A."/>
            <person name="Felber R."/>
            <person name="Schnabl S."/>
            <person name="Hiller R."/>
            <person name="Schmidt W."/>
            <person name="Lecharny A."/>
            <person name="Aubourg S."/>
            <person name="Chefdor F."/>
            <person name="Cooke R."/>
            <person name="Berger C."/>
            <person name="Monfort A."/>
            <person name="Casacuberta E."/>
            <person name="Gibbons T."/>
            <person name="Weber N."/>
            <person name="Vandenbol M."/>
            <person name="Bargues M."/>
            <person name="Terol J."/>
            <person name="Torres A."/>
            <person name="Perez-Perez A."/>
            <person name="Purnelle B."/>
            <person name="Bent E."/>
            <person name="Johnson S."/>
            <person name="Tacon D."/>
            <person name="Jesse T."/>
            <person name="Heijnen L."/>
            <person name="Schwarz S."/>
            <person name="Scholler P."/>
            <person name="Heber S."/>
            <person name="Francs P."/>
            <person name="Bielke C."/>
            <person name="Frishman D."/>
            <person name="Haase D."/>
            <person name="Lemcke K."/>
            <person name="Mewes H.-W."/>
            <person name="Stocker S."/>
            <person name="Zaccaria P."/>
            <person name="Bevan M."/>
            <person name="Wilson R.K."/>
            <person name="de la Bastide M."/>
            <person name="Habermann K."/>
            <person name="Parnell L."/>
            <person name="Dedhia N."/>
            <person name="Gnoj L."/>
            <person name="Schutz K."/>
            <person name="Huang E."/>
            <person name="Spiegel L."/>
            <person name="Sekhon M."/>
            <person name="Murray J."/>
            <person name="Sheet P."/>
            <person name="Cordes M."/>
            <person name="Abu-Threideh J."/>
            <person name="Stoneking T."/>
            <person name="Kalicki J."/>
            <person name="Graves T."/>
            <person name="Harmon G."/>
            <person name="Edwards J."/>
            <person name="Latreille P."/>
            <person name="Courtney L."/>
            <person name="Cloud J."/>
            <person name="Abbott A."/>
            <person name="Scott K."/>
            <person name="Johnson D."/>
            <person name="Minx P."/>
            <person name="Bentley D."/>
            <person name="Fulton B."/>
            <person name="Miller N."/>
            <person name="Greco T."/>
            <person name="Kemp K."/>
            <person name="Kramer J."/>
            <person name="Fulton L."/>
            <person name="Mardis E."/>
            <person name="Dante M."/>
            <person name="Pepin K."/>
            <person name="Hillier L.W."/>
            <person name="Nelson J."/>
            <person name="Spieth J."/>
            <person name="Ryan E."/>
            <person name="Andrews S."/>
            <person name="Geisel C."/>
            <person name="Layman D."/>
            <person name="Du H."/>
            <person name="Ali J."/>
            <person name="Berghoff A."/>
            <person name="Jones K."/>
            <person name="Drone K."/>
            <person name="Cotton M."/>
            <person name="Joshu C."/>
            <person name="Antonoiu B."/>
            <person name="Zidanic M."/>
            <person name="Strong C."/>
            <person name="Sun H."/>
            <person name="Lamar B."/>
            <person name="Yordan C."/>
            <person name="Ma P."/>
            <person name="Zhong J."/>
            <person name="Preston R."/>
            <person name="Vil D."/>
            <person name="Shekher M."/>
            <person name="Matero A."/>
            <person name="Shah R."/>
            <person name="Swaby I.K."/>
            <person name="O'Shaughnessy A."/>
            <person name="Rodriguez M."/>
            <person name="Hoffman J."/>
            <person name="Till S."/>
            <person name="Granat S."/>
            <person name="Shohdy N."/>
            <person name="Hasegawa A."/>
            <person name="Hameed A."/>
            <person name="Lodhi M."/>
            <person name="Johnson A."/>
            <person name="Chen E."/>
            <person name="Marra M.A."/>
            <person name="Martienssen R."/>
            <person name="McCombie W.R."/>
        </authorList>
    </citation>
    <scope>NUCLEOTIDE SEQUENCE [LARGE SCALE GENOMIC DNA]</scope>
    <source>
        <strain>cv. Columbia</strain>
    </source>
</reference>
<reference key="2">
    <citation type="journal article" date="2017" name="Plant J.">
        <title>Araport11: a complete reannotation of the Arabidopsis thaliana reference genome.</title>
        <authorList>
            <person name="Cheng C.Y."/>
            <person name="Krishnakumar V."/>
            <person name="Chan A.P."/>
            <person name="Thibaud-Nissen F."/>
            <person name="Schobel S."/>
            <person name="Town C.D."/>
        </authorList>
    </citation>
    <scope>GENOME REANNOTATION</scope>
    <source>
        <strain>cv. Columbia</strain>
    </source>
</reference>
<reference key="3">
    <citation type="journal article" date="2003" name="Science">
        <title>Empirical analysis of transcriptional activity in the Arabidopsis genome.</title>
        <authorList>
            <person name="Yamada K."/>
            <person name="Lim J."/>
            <person name="Dale J.M."/>
            <person name="Chen H."/>
            <person name="Shinn P."/>
            <person name="Palm C.J."/>
            <person name="Southwick A.M."/>
            <person name="Wu H.C."/>
            <person name="Kim C.J."/>
            <person name="Nguyen M."/>
            <person name="Pham P.K."/>
            <person name="Cheuk R.F."/>
            <person name="Karlin-Newmann G."/>
            <person name="Liu S.X."/>
            <person name="Lam B."/>
            <person name="Sakano H."/>
            <person name="Wu T."/>
            <person name="Yu G."/>
            <person name="Miranda M."/>
            <person name="Quach H.L."/>
            <person name="Tripp M."/>
            <person name="Chang C.H."/>
            <person name="Lee J.M."/>
            <person name="Toriumi M.J."/>
            <person name="Chan M.M."/>
            <person name="Tang C.C."/>
            <person name="Onodera C.S."/>
            <person name="Deng J.M."/>
            <person name="Akiyama K."/>
            <person name="Ansari Y."/>
            <person name="Arakawa T."/>
            <person name="Banh J."/>
            <person name="Banno F."/>
            <person name="Bowser L."/>
            <person name="Brooks S.Y."/>
            <person name="Carninci P."/>
            <person name="Chao Q."/>
            <person name="Choy N."/>
            <person name="Enju A."/>
            <person name="Goldsmith A.D."/>
            <person name="Gurjal M."/>
            <person name="Hansen N.F."/>
            <person name="Hayashizaki Y."/>
            <person name="Johnson-Hopson C."/>
            <person name="Hsuan V.W."/>
            <person name="Iida K."/>
            <person name="Karnes M."/>
            <person name="Khan S."/>
            <person name="Koesema E."/>
            <person name="Ishida J."/>
            <person name="Jiang P.X."/>
            <person name="Jones T."/>
            <person name="Kawai J."/>
            <person name="Kamiya A."/>
            <person name="Meyers C."/>
            <person name="Nakajima M."/>
            <person name="Narusaka M."/>
            <person name="Seki M."/>
            <person name="Sakurai T."/>
            <person name="Satou M."/>
            <person name="Tamse R."/>
            <person name="Vaysberg M."/>
            <person name="Wallender E.K."/>
            <person name="Wong C."/>
            <person name="Yamamura Y."/>
            <person name="Yuan S."/>
            <person name="Shinozaki K."/>
            <person name="Davis R.W."/>
            <person name="Theologis A."/>
            <person name="Ecker J.R."/>
        </authorList>
    </citation>
    <scope>NUCLEOTIDE SEQUENCE [LARGE SCALE MRNA]</scope>
    <source>
        <strain>cv. Columbia</strain>
    </source>
</reference>
<reference key="4">
    <citation type="journal article" date="2004" name="Plant Cell">
        <title>Genome-wide analysis of Arabidopsis pentatricopeptide repeat proteins reveals their essential role in organelle biogenesis.</title>
        <authorList>
            <person name="Lurin C."/>
            <person name="Andres C."/>
            <person name="Aubourg S."/>
            <person name="Bellaoui M."/>
            <person name="Bitton F."/>
            <person name="Bruyere C."/>
            <person name="Caboche M."/>
            <person name="Debast C."/>
            <person name="Gualberto J."/>
            <person name="Hoffmann B."/>
            <person name="Lecharny A."/>
            <person name="Le Ret M."/>
            <person name="Martin-Magniette M.-L."/>
            <person name="Mireau H."/>
            <person name="Peeters N."/>
            <person name="Renou J.-P."/>
            <person name="Szurek B."/>
            <person name="Taconnat L."/>
            <person name="Small I."/>
        </authorList>
    </citation>
    <scope>GENE FAMILY</scope>
</reference>
<keyword id="KW-1185">Reference proteome</keyword>
<keyword id="KW-0677">Repeat</keyword>
<feature type="chain" id="PRO_0000363457" description="Pentatricopeptide repeat-containing protein At4g28010">
    <location>
        <begin position="1"/>
        <end position="704"/>
    </location>
</feature>
<feature type="repeat" description="PPR 1">
    <location>
        <begin position="71"/>
        <end position="105"/>
    </location>
</feature>
<feature type="repeat" description="PPR 2">
    <location>
        <begin position="106"/>
        <end position="140"/>
    </location>
</feature>
<feature type="repeat" description="PPR 3">
    <location>
        <begin position="141"/>
        <end position="175"/>
    </location>
</feature>
<feature type="repeat" description="PPR 4">
    <location>
        <begin position="176"/>
        <end position="210"/>
    </location>
</feature>
<feature type="repeat" description="PPR 5">
    <location>
        <begin position="211"/>
        <end position="245"/>
    </location>
</feature>
<feature type="repeat" description="PPR 6">
    <location>
        <begin position="246"/>
        <end position="280"/>
    </location>
</feature>
<feature type="repeat" description="PPR 7">
    <location>
        <begin position="281"/>
        <end position="315"/>
    </location>
</feature>
<feature type="repeat" description="PPR 8">
    <location>
        <begin position="316"/>
        <end position="350"/>
    </location>
</feature>
<feature type="repeat" description="PPR 9">
    <location>
        <begin position="351"/>
        <end position="385"/>
    </location>
</feature>
<feature type="repeat" description="PPR 10">
    <location>
        <begin position="386"/>
        <end position="416"/>
    </location>
</feature>
<feature type="repeat" description="PPR 11">
    <location>
        <begin position="423"/>
        <end position="453"/>
    </location>
</feature>
<feature type="repeat" description="PPR 12">
    <location>
        <begin position="458"/>
        <end position="492"/>
    </location>
</feature>
<feature type="repeat" description="PPR 13">
    <location>
        <begin position="493"/>
        <end position="527"/>
    </location>
</feature>
<feature type="repeat" description="PPR 14">
    <location>
        <begin position="528"/>
        <end position="562"/>
    </location>
</feature>
<feature type="repeat" description="PPR 15">
    <location>
        <begin position="563"/>
        <end position="597"/>
    </location>
</feature>
<feature type="repeat" description="PPR 16">
    <location>
        <begin position="598"/>
        <end position="632"/>
    </location>
</feature>
<feature type="repeat" description="PPR 17">
    <location>
        <begin position="633"/>
        <end position="667"/>
    </location>
</feature>
<feature type="sequence conflict" description="In Ref. 3; AAM91084." evidence="1" ref="3">
    <original>N</original>
    <variation>S</variation>
    <location>
        <position position="76"/>
    </location>
</feature>
<feature type="sequence conflict" description="In Ref. 3; AAM91084." evidence="1" ref="3">
    <original>L</original>
    <variation>P</variation>
    <location>
        <position position="339"/>
    </location>
</feature>
<organism>
    <name type="scientific">Arabidopsis thaliana</name>
    <name type="common">Mouse-ear cress</name>
    <dbReference type="NCBI Taxonomy" id="3702"/>
    <lineage>
        <taxon>Eukaryota</taxon>
        <taxon>Viridiplantae</taxon>
        <taxon>Streptophyta</taxon>
        <taxon>Embryophyta</taxon>
        <taxon>Tracheophyta</taxon>
        <taxon>Spermatophyta</taxon>
        <taxon>Magnoliopsida</taxon>
        <taxon>eudicotyledons</taxon>
        <taxon>Gunneridae</taxon>
        <taxon>Pentapetalae</taxon>
        <taxon>rosids</taxon>
        <taxon>malvids</taxon>
        <taxon>Brassicales</taxon>
        <taxon>Brassicaceae</taxon>
        <taxon>Camelineae</taxon>
        <taxon>Arabidopsis</taxon>
    </lineage>
</organism>
<gene>
    <name type="ordered locus">At4g28010</name>
    <name type="ORF">T13J8.120</name>
</gene>